<name>SUCC_STAAS</name>
<proteinExistence type="inferred from homology"/>
<gene>
    <name evidence="1" type="primary">sucC</name>
    <name type="ordered locus">SAS1179</name>
</gene>
<evidence type="ECO:0000255" key="1">
    <source>
        <dbReference type="HAMAP-Rule" id="MF_00558"/>
    </source>
</evidence>
<accession>Q6G9W8</accession>
<keyword id="KW-0067">ATP-binding</keyword>
<keyword id="KW-0436">Ligase</keyword>
<keyword id="KW-0460">Magnesium</keyword>
<keyword id="KW-0479">Metal-binding</keyword>
<keyword id="KW-0547">Nucleotide-binding</keyword>
<keyword id="KW-0816">Tricarboxylic acid cycle</keyword>
<comment type="function">
    <text evidence="1">Succinyl-CoA synthetase functions in the citric acid cycle (TCA), coupling the hydrolysis of succinyl-CoA to the synthesis of either ATP or GTP and thus represents the only step of substrate-level phosphorylation in the TCA. The beta subunit provides nucleotide specificity of the enzyme and binds the substrate succinate, while the binding sites for coenzyme A and phosphate are found in the alpha subunit.</text>
</comment>
<comment type="catalytic activity">
    <reaction evidence="1">
        <text>succinate + ATP + CoA = succinyl-CoA + ADP + phosphate</text>
        <dbReference type="Rhea" id="RHEA:17661"/>
        <dbReference type="ChEBI" id="CHEBI:30031"/>
        <dbReference type="ChEBI" id="CHEBI:30616"/>
        <dbReference type="ChEBI" id="CHEBI:43474"/>
        <dbReference type="ChEBI" id="CHEBI:57287"/>
        <dbReference type="ChEBI" id="CHEBI:57292"/>
        <dbReference type="ChEBI" id="CHEBI:456216"/>
        <dbReference type="EC" id="6.2.1.5"/>
    </reaction>
    <physiologicalReaction direction="right-to-left" evidence="1">
        <dbReference type="Rhea" id="RHEA:17663"/>
    </physiologicalReaction>
</comment>
<comment type="catalytic activity">
    <reaction evidence="1">
        <text>GTP + succinate + CoA = succinyl-CoA + GDP + phosphate</text>
        <dbReference type="Rhea" id="RHEA:22120"/>
        <dbReference type="ChEBI" id="CHEBI:30031"/>
        <dbReference type="ChEBI" id="CHEBI:37565"/>
        <dbReference type="ChEBI" id="CHEBI:43474"/>
        <dbReference type="ChEBI" id="CHEBI:57287"/>
        <dbReference type="ChEBI" id="CHEBI:57292"/>
        <dbReference type="ChEBI" id="CHEBI:58189"/>
    </reaction>
    <physiologicalReaction direction="right-to-left" evidence="1">
        <dbReference type="Rhea" id="RHEA:22122"/>
    </physiologicalReaction>
</comment>
<comment type="cofactor">
    <cofactor evidence="1">
        <name>Mg(2+)</name>
        <dbReference type="ChEBI" id="CHEBI:18420"/>
    </cofactor>
    <text evidence="1">Binds 1 Mg(2+) ion per subunit.</text>
</comment>
<comment type="pathway">
    <text evidence="1">Carbohydrate metabolism; tricarboxylic acid cycle; succinate from succinyl-CoA (ligase route): step 1/1.</text>
</comment>
<comment type="subunit">
    <text evidence="1">Heterotetramer of two alpha and two beta subunits.</text>
</comment>
<comment type="similarity">
    <text evidence="1">Belongs to the succinate/malate CoA ligase beta subunit family.</text>
</comment>
<dbReference type="EC" id="6.2.1.5" evidence="1"/>
<dbReference type="EMBL" id="BX571857">
    <property type="protein sequence ID" value="CAG42956.1"/>
    <property type="molecule type" value="Genomic_DNA"/>
</dbReference>
<dbReference type="RefSeq" id="WP_001020801.1">
    <property type="nucleotide sequence ID" value="NC_002953.3"/>
</dbReference>
<dbReference type="SMR" id="Q6G9W8"/>
<dbReference type="KEGG" id="sas:SAS1179"/>
<dbReference type="HOGENOM" id="CLU_037430_0_2_9"/>
<dbReference type="UniPathway" id="UPA00223">
    <property type="reaction ID" value="UER00999"/>
</dbReference>
<dbReference type="GO" id="GO:0005829">
    <property type="term" value="C:cytosol"/>
    <property type="evidence" value="ECO:0007669"/>
    <property type="project" value="TreeGrafter"/>
</dbReference>
<dbReference type="GO" id="GO:0042709">
    <property type="term" value="C:succinate-CoA ligase complex"/>
    <property type="evidence" value="ECO:0007669"/>
    <property type="project" value="TreeGrafter"/>
</dbReference>
<dbReference type="GO" id="GO:0005524">
    <property type="term" value="F:ATP binding"/>
    <property type="evidence" value="ECO:0007669"/>
    <property type="project" value="UniProtKB-UniRule"/>
</dbReference>
<dbReference type="GO" id="GO:0000287">
    <property type="term" value="F:magnesium ion binding"/>
    <property type="evidence" value="ECO:0007669"/>
    <property type="project" value="UniProtKB-UniRule"/>
</dbReference>
<dbReference type="GO" id="GO:0004775">
    <property type="term" value="F:succinate-CoA ligase (ADP-forming) activity"/>
    <property type="evidence" value="ECO:0007669"/>
    <property type="project" value="UniProtKB-UniRule"/>
</dbReference>
<dbReference type="GO" id="GO:0004776">
    <property type="term" value="F:succinate-CoA ligase (GDP-forming) activity"/>
    <property type="evidence" value="ECO:0007669"/>
    <property type="project" value="RHEA"/>
</dbReference>
<dbReference type="GO" id="GO:0006104">
    <property type="term" value="P:succinyl-CoA metabolic process"/>
    <property type="evidence" value="ECO:0007669"/>
    <property type="project" value="TreeGrafter"/>
</dbReference>
<dbReference type="GO" id="GO:0006099">
    <property type="term" value="P:tricarboxylic acid cycle"/>
    <property type="evidence" value="ECO:0007669"/>
    <property type="project" value="UniProtKB-UniRule"/>
</dbReference>
<dbReference type="FunFam" id="3.30.1490.20:FF:000002">
    <property type="entry name" value="Succinate--CoA ligase [ADP-forming] subunit beta"/>
    <property type="match status" value="1"/>
</dbReference>
<dbReference type="FunFam" id="3.30.470.20:FF:000002">
    <property type="entry name" value="Succinate--CoA ligase [ADP-forming] subunit beta"/>
    <property type="match status" value="1"/>
</dbReference>
<dbReference type="FunFam" id="3.40.50.261:FF:000001">
    <property type="entry name" value="Succinate--CoA ligase [ADP-forming] subunit beta"/>
    <property type="match status" value="1"/>
</dbReference>
<dbReference type="Gene3D" id="3.30.1490.20">
    <property type="entry name" value="ATP-grasp fold, A domain"/>
    <property type="match status" value="1"/>
</dbReference>
<dbReference type="Gene3D" id="3.30.470.20">
    <property type="entry name" value="ATP-grasp fold, B domain"/>
    <property type="match status" value="1"/>
</dbReference>
<dbReference type="Gene3D" id="3.40.50.261">
    <property type="entry name" value="Succinyl-CoA synthetase domains"/>
    <property type="match status" value="1"/>
</dbReference>
<dbReference type="HAMAP" id="MF_00558">
    <property type="entry name" value="Succ_CoA_beta"/>
    <property type="match status" value="1"/>
</dbReference>
<dbReference type="InterPro" id="IPR011761">
    <property type="entry name" value="ATP-grasp"/>
</dbReference>
<dbReference type="InterPro" id="IPR013650">
    <property type="entry name" value="ATP-grasp_succ-CoA_synth-type"/>
</dbReference>
<dbReference type="InterPro" id="IPR013815">
    <property type="entry name" value="ATP_grasp_subdomain_1"/>
</dbReference>
<dbReference type="InterPro" id="IPR017866">
    <property type="entry name" value="Succ-CoA_synthase_bsu_CS"/>
</dbReference>
<dbReference type="InterPro" id="IPR005811">
    <property type="entry name" value="SUCC_ACL_C"/>
</dbReference>
<dbReference type="InterPro" id="IPR005809">
    <property type="entry name" value="Succ_CoA_ligase-like_bsu"/>
</dbReference>
<dbReference type="InterPro" id="IPR016102">
    <property type="entry name" value="Succinyl-CoA_synth-like"/>
</dbReference>
<dbReference type="NCBIfam" id="NF001913">
    <property type="entry name" value="PRK00696.1"/>
    <property type="match status" value="1"/>
</dbReference>
<dbReference type="NCBIfam" id="TIGR01016">
    <property type="entry name" value="sucCoAbeta"/>
    <property type="match status" value="1"/>
</dbReference>
<dbReference type="PANTHER" id="PTHR11815:SF10">
    <property type="entry name" value="SUCCINATE--COA LIGASE [GDP-FORMING] SUBUNIT BETA, MITOCHONDRIAL"/>
    <property type="match status" value="1"/>
</dbReference>
<dbReference type="PANTHER" id="PTHR11815">
    <property type="entry name" value="SUCCINYL-COA SYNTHETASE BETA CHAIN"/>
    <property type="match status" value="1"/>
</dbReference>
<dbReference type="Pfam" id="PF08442">
    <property type="entry name" value="ATP-grasp_2"/>
    <property type="match status" value="1"/>
</dbReference>
<dbReference type="Pfam" id="PF00549">
    <property type="entry name" value="Ligase_CoA"/>
    <property type="match status" value="1"/>
</dbReference>
<dbReference type="PIRSF" id="PIRSF001554">
    <property type="entry name" value="SucCS_beta"/>
    <property type="match status" value="1"/>
</dbReference>
<dbReference type="SUPFAM" id="SSF56059">
    <property type="entry name" value="Glutathione synthetase ATP-binding domain-like"/>
    <property type="match status" value="1"/>
</dbReference>
<dbReference type="SUPFAM" id="SSF52210">
    <property type="entry name" value="Succinyl-CoA synthetase domains"/>
    <property type="match status" value="1"/>
</dbReference>
<dbReference type="PROSITE" id="PS50975">
    <property type="entry name" value="ATP_GRASP"/>
    <property type="match status" value="1"/>
</dbReference>
<dbReference type="PROSITE" id="PS01217">
    <property type="entry name" value="SUCCINYL_COA_LIG_3"/>
    <property type="match status" value="1"/>
</dbReference>
<sequence>MNIHEYQGKEIFRSMGVAVPEGRVAFTAEEAVEKAKELNSDVYVVKAQIHAGGRGKAGGVKIAKSLSEVETYAKELLGKTLVTHQTGPEGKEIKRLYIEEGCAIQKEYYVGFVIDRATDQVTLMASEEGGTEIEEVAAKTPEKIFKETIDPVIGLSPFQARRIAFNINIPKESVNKAAKFLLALYNVFIEKDCSIVEINPLVTTADGDVLALDAKINFDDNALFRHKDVVELRDLEEEDPKEIEASKHDLSYIALDGDIGCMVNGAGLAMATMDTINHFGGNPANFLDAGGSATREKVTEAFKIILGDENVKGIFVNIFGGIMKCDVIAEGIVEAVKEVDLTLPLVVRLEGTNVELGKKILKDSGLAIEPAATMAEGAQKIVKLVKEA</sequence>
<organism>
    <name type="scientific">Staphylococcus aureus (strain MSSA476)</name>
    <dbReference type="NCBI Taxonomy" id="282459"/>
    <lineage>
        <taxon>Bacteria</taxon>
        <taxon>Bacillati</taxon>
        <taxon>Bacillota</taxon>
        <taxon>Bacilli</taxon>
        <taxon>Bacillales</taxon>
        <taxon>Staphylococcaceae</taxon>
        <taxon>Staphylococcus</taxon>
    </lineage>
</organism>
<protein>
    <recommendedName>
        <fullName evidence="1">Succinate--CoA ligase [ADP-forming] subunit beta</fullName>
        <ecNumber evidence="1">6.2.1.5</ecNumber>
    </recommendedName>
    <alternativeName>
        <fullName evidence="1">Succinyl-CoA synthetase subunit beta</fullName>
        <shortName evidence="1">SCS-beta</shortName>
    </alternativeName>
</protein>
<feature type="chain" id="PRO_0000102863" description="Succinate--CoA ligase [ADP-forming] subunit beta">
    <location>
        <begin position="1"/>
        <end position="388"/>
    </location>
</feature>
<feature type="domain" description="ATP-grasp" evidence="1">
    <location>
        <begin position="9"/>
        <end position="244"/>
    </location>
</feature>
<feature type="binding site" evidence="1">
    <location>
        <position position="46"/>
    </location>
    <ligand>
        <name>ATP</name>
        <dbReference type="ChEBI" id="CHEBI:30616"/>
    </ligand>
</feature>
<feature type="binding site" evidence="1">
    <location>
        <begin position="53"/>
        <end position="55"/>
    </location>
    <ligand>
        <name>ATP</name>
        <dbReference type="ChEBI" id="CHEBI:30616"/>
    </ligand>
</feature>
<feature type="binding site" evidence="1">
    <location>
        <position position="99"/>
    </location>
    <ligand>
        <name>ATP</name>
        <dbReference type="ChEBI" id="CHEBI:30616"/>
    </ligand>
</feature>
<feature type="binding site" evidence="1">
    <location>
        <position position="102"/>
    </location>
    <ligand>
        <name>ATP</name>
        <dbReference type="ChEBI" id="CHEBI:30616"/>
    </ligand>
</feature>
<feature type="binding site" evidence="1">
    <location>
        <position position="107"/>
    </location>
    <ligand>
        <name>ATP</name>
        <dbReference type="ChEBI" id="CHEBI:30616"/>
    </ligand>
</feature>
<feature type="binding site" evidence="1">
    <location>
        <position position="199"/>
    </location>
    <ligand>
        <name>Mg(2+)</name>
        <dbReference type="ChEBI" id="CHEBI:18420"/>
    </ligand>
</feature>
<feature type="binding site" evidence="1">
    <location>
        <position position="213"/>
    </location>
    <ligand>
        <name>Mg(2+)</name>
        <dbReference type="ChEBI" id="CHEBI:18420"/>
    </ligand>
</feature>
<feature type="binding site" evidence="1">
    <location>
        <position position="264"/>
    </location>
    <ligand>
        <name>substrate</name>
        <note>ligand shared with subunit alpha</note>
    </ligand>
</feature>
<feature type="binding site" evidence="1">
    <location>
        <begin position="321"/>
        <end position="323"/>
    </location>
    <ligand>
        <name>substrate</name>
        <note>ligand shared with subunit alpha</note>
    </ligand>
</feature>
<reference key="1">
    <citation type="journal article" date="2004" name="Proc. Natl. Acad. Sci. U.S.A.">
        <title>Complete genomes of two clinical Staphylococcus aureus strains: evidence for the rapid evolution of virulence and drug resistance.</title>
        <authorList>
            <person name="Holden M.T.G."/>
            <person name="Feil E.J."/>
            <person name="Lindsay J.A."/>
            <person name="Peacock S.J."/>
            <person name="Day N.P.J."/>
            <person name="Enright M.C."/>
            <person name="Foster T.J."/>
            <person name="Moore C.E."/>
            <person name="Hurst L."/>
            <person name="Atkin R."/>
            <person name="Barron A."/>
            <person name="Bason N."/>
            <person name="Bentley S.D."/>
            <person name="Chillingworth C."/>
            <person name="Chillingworth T."/>
            <person name="Churcher C."/>
            <person name="Clark L."/>
            <person name="Corton C."/>
            <person name="Cronin A."/>
            <person name="Doggett J."/>
            <person name="Dowd L."/>
            <person name="Feltwell T."/>
            <person name="Hance Z."/>
            <person name="Harris B."/>
            <person name="Hauser H."/>
            <person name="Holroyd S."/>
            <person name="Jagels K."/>
            <person name="James K.D."/>
            <person name="Lennard N."/>
            <person name="Line A."/>
            <person name="Mayes R."/>
            <person name="Moule S."/>
            <person name="Mungall K."/>
            <person name="Ormond D."/>
            <person name="Quail M.A."/>
            <person name="Rabbinowitsch E."/>
            <person name="Rutherford K.M."/>
            <person name="Sanders M."/>
            <person name="Sharp S."/>
            <person name="Simmonds M."/>
            <person name="Stevens K."/>
            <person name="Whitehead S."/>
            <person name="Barrell B.G."/>
            <person name="Spratt B.G."/>
            <person name="Parkhill J."/>
        </authorList>
    </citation>
    <scope>NUCLEOTIDE SEQUENCE [LARGE SCALE GENOMIC DNA]</scope>
    <source>
        <strain>MSSA476</strain>
    </source>
</reference>